<sequence length="471" mass="52795">MGSFPCPQKIEQVLLSGQGLNELSFASRPACASMLVERVPHHGVVYGLGQETAVAQPNLPEGFDFTDPDVYAERIPYQEFAELRKTAPIWWNPQPPEIGGFHDDGYWVVSKLEDVKEVSRRSDVFSTHENTAIVRFADDIPRENIEMQRFILINKDAPEHTKLRKLVSRGFTPRAINSLREELTERAEKIVKEAAESGAGDFVTQVACELPLQAIAELLGVPQEDRLKVFDWSNQMTGYDDPELDIDPQAASMEILGYAYQMADERKKCPADDIVTTLIEADIDGNELSPEEFGFFVILLAVAGNETTRNAITHGMMAFLDHPDQWELYKKERPKTTADEIVRWATPVNSFQRTALEDTELGGVQIKKGQRVVMLYGSANFDEDAFENPEKFDIMRENNPHVGFGGTGAHFCLGANLARLEIDLIFNAIADHLPDISKLGDPRRLRSGWLNGIKEFQVDYKTASGGCPVRH</sequence>
<name>CP125_RHOJR</name>
<keyword id="KW-0153">Cholesterol metabolism</keyword>
<keyword id="KW-0349">Heme</keyword>
<keyword id="KW-0408">Iron</keyword>
<keyword id="KW-0442">Lipid degradation</keyword>
<keyword id="KW-0443">Lipid metabolism</keyword>
<keyword id="KW-0479">Metal-binding</keyword>
<keyword id="KW-0503">Monooxygenase</keyword>
<keyword id="KW-0520">NAD</keyword>
<keyword id="KW-0560">Oxidoreductase</keyword>
<keyword id="KW-0753">Steroid metabolism</keyword>
<keyword id="KW-1207">Sterol metabolism</keyword>
<protein>
    <recommendedName>
        <fullName evidence="3">Steroid C26-monooxygenase</fullName>
        <ecNumber evidence="1 5">1.14.15.29</ecNumber>
    </recommendedName>
    <alternativeName>
        <fullName evidence="3">Cholest-4-en-3-one 26-monooxygenase</fullName>
    </alternativeName>
    <alternativeName>
        <fullName evidence="1 5">Cholest-4-en-3-one C26-monooxygenase [(25S)-3-oxocholest-4-en-26-oate forming]</fullName>
    </alternativeName>
    <alternativeName>
        <fullName evidence="3">Cholesterol C26-monooxygenase</fullName>
    </alternativeName>
    <alternativeName>
        <fullName evidence="1 5">Cholesterol C26-monooxygenase [(25S)-3beta-hydroxycholest-5-en-26-oate forming]</fullName>
    </alternativeName>
    <alternativeName>
        <fullName evidence="3">Cytochrome P450 125</fullName>
    </alternativeName>
    <alternativeName>
        <fullName evidence="3">Steroid C27-monooxygenase</fullName>
    </alternativeName>
</protein>
<gene>
    <name type="primary">cyp125</name>
    <name type="ordered locus">RHA1_ro04679</name>
</gene>
<evidence type="ECO:0000250" key="1">
    <source>
        <dbReference type="UniProtKB" id="P9WPP1"/>
    </source>
</evidence>
<evidence type="ECO:0000269" key="2">
    <source>
    </source>
</evidence>
<evidence type="ECO:0000303" key="3">
    <source>
    </source>
</evidence>
<evidence type="ECO:0000305" key="4"/>
<evidence type="ECO:0000305" key="5">
    <source>
    </source>
</evidence>
<organism>
    <name type="scientific">Rhodococcus jostii (strain RHA1)</name>
    <dbReference type="NCBI Taxonomy" id="101510"/>
    <lineage>
        <taxon>Bacteria</taxon>
        <taxon>Bacillati</taxon>
        <taxon>Actinomycetota</taxon>
        <taxon>Actinomycetes</taxon>
        <taxon>Mycobacteriales</taxon>
        <taxon>Nocardiaceae</taxon>
        <taxon>Rhodococcus</taxon>
    </lineage>
</organism>
<comment type="function">
    <text evidence="2">Involved in the utilization of cholesterol as the sole carbon and energy source by degrading the side chain. Primarily catalyzes the sequential oxidation of the terminal methyl of cholest-4-en-3-one into (25S)-26-hydroxycholest-4-en-3-one (alcohol), (25S)-26-oxocholest-4-en-3-one (aldehyde), to finally yield the carboxylic acid (25S)-3-oxocholest-4-en-26-oate. Also able to sequentially oxidize cholesterol itself, not only cholest-4-en-3-one.</text>
</comment>
<comment type="catalytic activity">
    <reaction evidence="1 5">
        <text>cholest-4-en-3-one + 6 reduced [2Fe-2S]-[ferredoxin] + 3 O2 + 5 H(+) = (25S)-3-oxocholest-4-en-26-oate + 6 oxidized [2Fe-2S]-[ferredoxin] + 4 H2O</text>
        <dbReference type="Rhea" id="RHEA:51564"/>
        <dbReference type="Rhea" id="RHEA-COMP:10000"/>
        <dbReference type="Rhea" id="RHEA-COMP:10001"/>
        <dbReference type="ChEBI" id="CHEBI:15377"/>
        <dbReference type="ChEBI" id="CHEBI:15378"/>
        <dbReference type="ChEBI" id="CHEBI:15379"/>
        <dbReference type="ChEBI" id="CHEBI:16175"/>
        <dbReference type="ChEBI" id="CHEBI:33737"/>
        <dbReference type="ChEBI" id="CHEBI:33738"/>
        <dbReference type="ChEBI" id="CHEBI:71541"/>
        <dbReference type="EC" id="1.14.15.29"/>
    </reaction>
</comment>
<comment type="cofactor">
    <cofactor evidence="2">
        <name>heme</name>
        <dbReference type="ChEBI" id="CHEBI:30413"/>
    </cofactor>
</comment>
<comment type="induction">
    <text evidence="5">By cholesterol.</text>
</comment>
<comment type="disruption phenotype">
    <text evidence="2">Cells lacking this gene fail to grow in the presence of cholesterol.</text>
</comment>
<comment type="similarity">
    <text evidence="4">Belongs to the cytochrome P450 family.</text>
</comment>
<feature type="chain" id="PRO_0000405334" description="Steroid C26-monooxygenase">
    <location>
        <begin position="1"/>
        <end position="471"/>
    </location>
</feature>
<feature type="binding site" evidence="1">
    <location>
        <position position="238"/>
    </location>
    <ligand>
        <name>substrate</name>
    </ligand>
</feature>
<feature type="binding site" description="axial binding residue" evidence="1">
    <location>
        <position position="412"/>
    </location>
    <ligand>
        <name>heme</name>
        <dbReference type="ChEBI" id="CHEBI:30413"/>
    </ligand>
    <ligandPart>
        <name>Fe</name>
        <dbReference type="ChEBI" id="CHEBI:18248"/>
    </ligandPart>
</feature>
<accession>Q0S7M1</accession>
<dbReference type="EC" id="1.14.15.29" evidence="1 5"/>
<dbReference type="EMBL" id="CP000431">
    <property type="protein sequence ID" value="ABG96465.1"/>
    <property type="molecule type" value="Genomic_DNA"/>
</dbReference>
<dbReference type="SMR" id="Q0S7M1"/>
<dbReference type="KEGG" id="rha:RHA1_ro04679"/>
<dbReference type="eggNOG" id="COG2124">
    <property type="taxonomic scope" value="Bacteria"/>
</dbReference>
<dbReference type="HOGENOM" id="CLU_033716_0_0_11"/>
<dbReference type="BioCyc" id="MetaCyc:RHA1_RO04679-MONOMER"/>
<dbReference type="Proteomes" id="UP000008710">
    <property type="component" value="Chromosome"/>
</dbReference>
<dbReference type="GO" id="GO:0036199">
    <property type="term" value="F:cholest-4-en-3-one 26-monooxygenase activity"/>
    <property type="evidence" value="ECO:0007669"/>
    <property type="project" value="UniProtKB-EC"/>
</dbReference>
<dbReference type="GO" id="GO:0020037">
    <property type="term" value="F:heme binding"/>
    <property type="evidence" value="ECO:0007669"/>
    <property type="project" value="InterPro"/>
</dbReference>
<dbReference type="GO" id="GO:0005506">
    <property type="term" value="F:iron ion binding"/>
    <property type="evidence" value="ECO:0007669"/>
    <property type="project" value="InterPro"/>
</dbReference>
<dbReference type="GO" id="GO:0008395">
    <property type="term" value="F:steroid hydroxylase activity"/>
    <property type="evidence" value="ECO:0007669"/>
    <property type="project" value="TreeGrafter"/>
</dbReference>
<dbReference type="GO" id="GO:0006707">
    <property type="term" value="P:cholesterol catabolic process"/>
    <property type="evidence" value="ECO:0007669"/>
    <property type="project" value="TreeGrafter"/>
</dbReference>
<dbReference type="CDD" id="cd11033">
    <property type="entry name" value="CYP142-like"/>
    <property type="match status" value="1"/>
</dbReference>
<dbReference type="FunFam" id="1.10.630.10:FF:000018">
    <property type="entry name" value="Cytochrome P450 monooxygenase"/>
    <property type="match status" value="1"/>
</dbReference>
<dbReference type="Gene3D" id="1.10.630.10">
    <property type="entry name" value="Cytochrome P450"/>
    <property type="match status" value="1"/>
</dbReference>
<dbReference type="InterPro" id="IPR001128">
    <property type="entry name" value="Cyt_P450"/>
</dbReference>
<dbReference type="InterPro" id="IPR002397">
    <property type="entry name" value="Cyt_P450_B"/>
</dbReference>
<dbReference type="InterPro" id="IPR036396">
    <property type="entry name" value="Cyt_P450_sf"/>
</dbReference>
<dbReference type="PANTHER" id="PTHR46696:SF4">
    <property type="entry name" value="BIOTIN BIOSYNTHESIS CYTOCHROME P450"/>
    <property type="match status" value="1"/>
</dbReference>
<dbReference type="PANTHER" id="PTHR46696">
    <property type="entry name" value="P450, PUTATIVE (EUROFUNG)-RELATED"/>
    <property type="match status" value="1"/>
</dbReference>
<dbReference type="Pfam" id="PF00067">
    <property type="entry name" value="p450"/>
    <property type="match status" value="1"/>
</dbReference>
<dbReference type="PRINTS" id="PR00359">
    <property type="entry name" value="BP450"/>
</dbReference>
<dbReference type="SUPFAM" id="SSF48264">
    <property type="entry name" value="Cytochrome P450"/>
    <property type="match status" value="1"/>
</dbReference>
<proteinExistence type="evidence at protein level"/>
<reference key="1">
    <citation type="journal article" date="2006" name="Proc. Natl. Acad. Sci. U.S.A.">
        <title>The complete genome of Rhodococcus sp. RHA1 provides insights into a catabolic powerhouse.</title>
        <authorList>
            <person name="McLeod M.P."/>
            <person name="Warren R.L."/>
            <person name="Hsiao W.W.L."/>
            <person name="Araki N."/>
            <person name="Myhre M."/>
            <person name="Fernandes C."/>
            <person name="Miyazawa D."/>
            <person name="Wong W."/>
            <person name="Lillquist A.L."/>
            <person name="Wang D."/>
            <person name="Dosanjh M."/>
            <person name="Hara H."/>
            <person name="Petrescu A."/>
            <person name="Morin R.D."/>
            <person name="Yang G."/>
            <person name="Stott J.M."/>
            <person name="Schein J.E."/>
            <person name="Shin H."/>
            <person name="Smailus D."/>
            <person name="Siddiqui A.S."/>
            <person name="Marra M.A."/>
            <person name="Jones S.J.M."/>
            <person name="Holt R."/>
            <person name="Brinkman F.S.L."/>
            <person name="Miyauchi K."/>
            <person name="Fukuda M."/>
            <person name="Davies J.E."/>
            <person name="Mohn W.W."/>
            <person name="Eltis L.D."/>
        </authorList>
    </citation>
    <scope>NUCLEOTIDE SEQUENCE [LARGE SCALE GENOMIC DNA]</scope>
    <source>
        <strain>RHA1</strain>
    </source>
</reference>
<reference key="2">
    <citation type="journal article" date="2009" name="Mol. Microbiol.">
        <title>Cytochrome P450 125 (CYP125) catalyses C26-hydroxylation to initiate sterol side-chain degradation in Rhodococcus jostii RHA1.</title>
        <authorList>
            <person name="Rosloniec K.Z."/>
            <person name="Wilbrink M.H."/>
            <person name="Capyk J.K."/>
            <person name="Mohn W.W."/>
            <person name="Ostendorf M."/>
            <person name="van der Geize R."/>
            <person name="Dijkhuizen L."/>
            <person name="Eltis L.D."/>
        </authorList>
    </citation>
    <scope>FUNCTION IN CHOLESTEROL CATABOLISM</scope>
    <scope>CATALYTIC ACTIVITY</scope>
    <scope>COFACTOR</scope>
    <scope>DISRUPTION PHENOTYPE</scope>
    <scope>INDUCTION</scope>
    <scope>SUBSTRATE SPECIFICITY</scope>
    <source>
        <strain>RHA1</strain>
    </source>
</reference>